<organism evidence="8">
    <name type="scientific">Chaetomium thermophilum (strain DSM 1495 / CBS 144.50 / IMI 039719)</name>
    <name type="common">Thermochaetoides thermophila</name>
    <dbReference type="NCBI Taxonomy" id="759272"/>
    <lineage>
        <taxon>Eukaryota</taxon>
        <taxon>Fungi</taxon>
        <taxon>Dikarya</taxon>
        <taxon>Ascomycota</taxon>
        <taxon>Pezizomycotina</taxon>
        <taxon>Sordariomycetes</taxon>
        <taxon>Sordariomycetidae</taxon>
        <taxon>Sordariales</taxon>
        <taxon>Chaetomiaceae</taxon>
        <taxon>Thermochaetoides</taxon>
    </lineage>
</organism>
<protein>
    <recommendedName>
        <fullName evidence="5">DASH complex subunit DAM1</fullName>
    </recommendedName>
    <alternativeName>
        <fullName evidence="1">Outer kinetochore protein DAM1</fullName>
    </alternativeName>
</protein>
<keyword id="KW-0002">3D-structure</keyword>
<keyword id="KW-0137">Centromere</keyword>
<keyword id="KW-0158">Chromosome</keyword>
<keyword id="KW-0159">Chromosome partition</keyword>
<keyword id="KW-0963">Cytoplasm</keyword>
<keyword id="KW-0206">Cytoskeleton</keyword>
<keyword id="KW-0995">Kinetochore</keyword>
<keyword id="KW-0493">Microtubule</keyword>
<keyword id="KW-0539">Nucleus</keyword>
<keyword id="KW-1185">Reference proteome</keyword>
<reference evidence="8" key="1">
    <citation type="journal article" date="2011" name="Cell">
        <title>Insight into structure and assembly of the nuclear pore complex by utilizing the genome of a eukaryotic thermophile.</title>
        <authorList>
            <person name="Amlacher S."/>
            <person name="Sarges P."/>
            <person name="Flemming D."/>
            <person name="van Noort V."/>
            <person name="Kunze R."/>
            <person name="Devos D.P."/>
            <person name="Arumugam M."/>
            <person name="Bork P."/>
            <person name="Hurt E."/>
        </authorList>
    </citation>
    <scope>NUCLEOTIDE SEQUENCE [LARGE SCALE GENOMIC DNA]</scope>
    <source>
        <strain evidence="8">DSM 1495 / CBS 144.50 / IMI 039719</strain>
    </source>
</reference>
<reference evidence="9" key="2">
    <citation type="journal article" date="2018" name="Science">
        <title>Structure of the DASH/Dam1 complex shows its role at the yeast kinetochore-microtubule interface.</title>
        <authorList>
            <person name="Jenni S."/>
            <person name="Harrison S.C."/>
        </authorList>
    </citation>
    <scope>STRUCTURE BY ELECTRON MICROSCOPY (4.50 ANGSTROMS) OF 52-107</scope>
    <scope>IDENTIFICATION IN THE DASH COMPLEX</scope>
</reference>
<accession>G0S2K4</accession>
<name>DAM1_CHATD</name>
<dbReference type="EMBL" id="GL988040">
    <property type="protein sequence ID" value="EGS22237.1"/>
    <property type="molecule type" value="Genomic_DNA"/>
</dbReference>
<dbReference type="RefSeq" id="XP_006692256.1">
    <property type="nucleotide sequence ID" value="XM_006692193.1"/>
</dbReference>
<dbReference type="PDB" id="6CFZ">
    <property type="method" value="EM"/>
    <property type="resolution" value="4.50 A"/>
    <property type="chains" value="H=52-107"/>
</dbReference>
<dbReference type="PDBsum" id="6CFZ"/>
<dbReference type="EMDB" id="EMD-7469"/>
<dbReference type="SMR" id="G0S2K4"/>
<dbReference type="IntAct" id="G0S2K4">
    <property type="interactions" value="1"/>
</dbReference>
<dbReference type="STRING" id="759272.G0S2K4"/>
<dbReference type="GeneID" id="18255792"/>
<dbReference type="KEGG" id="cthr:CTHT_0017540"/>
<dbReference type="eggNOG" id="ENOG502S08R">
    <property type="taxonomic scope" value="Eukaryota"/>
</dbReference>
<dbReference type="HOGENOM" id="CLU_083960_1_0_1"/>
<dbReference type="OrthoDB" id="5586015at2759"/>
<dbReference type="Proteomes" id="UP000008066">
    <property type="component" value="Unassembled WGS sequence"/>
</dbReference>
<dbReference type="GO" id="GO:0005737">
    <property type="term" value="C:cytoplasm"/>
    <property type="evidence" value="ECO:0007669"/>
    <property type="project" value="UniProtKB-KW"/>
</dbReference>
<dbReference type="GO" id="GO:0042729">
    <property type="term" value="C:DASH complex"/>
    <property type="evidence" value="ECO:0000314"/>
    <property type="project" value="UniProtKB"/>
</dbReference>
<dbReference type="GO" id="GO:0000776">
    <property type="term" value="C:kinetochore"/>
    <property type="evidence" value="ECO:0000305"/>
    <property type="project" value="UniProtKB"/>
</dbReference>
<dbReference type="GO" id="GO:0072686">
    <property type="term" value="C:mitotic spindle"/>
    <property type="evidence" value="ECO:0000305"/>
    <property type="project" value="UniProtKB"/>
</dbReference>
<dbReference type="GO" id="GO:1990537">
    <property type="term" value="C:mitotic spindle polar microtubule"/>
    <property type="evidence" value="ECO:0007669"/>
    <property type="project" value="TreeGrafter"/>
</dbReference>
<dbReference type="GO" id="GO:0044732">
    <property type="term" value="C:mitotic spindle pole body"/>
    <property type="evidence" value="ECO:0007669"/>
    <property type="project" value="TreeGrafter"/>
</dbReference>
<dbReference type="GO" id="GO:0051315">
    <property type="term" value="P:attachment of mitotic spindle microtubules to kinetochore"/>
    <property type="evidence" value="ECO:0000305"/>
    <property type="project" value="UniProtKB"/>
</dbReference>
<dbReference type="GO" id="GO:0008608">
    <property type="term" value="P:attachment of spindle microtubules to kinetochore"/>
    <property type="evidence" value="ECO:0000250"/>
    <property type="project" value="UniProtKB"/>
</dbReference>
<dbReference type="GO" id="GO:1990758">
    <property type="term" value="P:mitotic sister chromatid biorientation"/>
    <property type="evidence" value="ECO:0000250"/>
    <property type="project" value="UniProtKB"/>
</dbReference>
<dbReference type="GO" id="GO:1990976">
    <property type="term" value="P:protein transport along microtubule to mitotic spindle pole body"/>
    <property type="evidence" value="ECO:0000250"/>
    <property type="project" value="UniProtKB"/>
</dbReference>
<dbReference type="InterPro" id="IPR013962">
    <property type="entry name" value="DASH_Dam1"/>
</dbReference>
<dbReference type="PANTHER" id="PTHR28113">
    <property type="entry name" value="DASH COMPLEX SUBUNIT DAM1"/>
    <property type="match status" value="1"/>
</dbReference>
<dbReference type="PANTHER" id="PTHR28113:SF1">
    <property type="entry name" value="DASH COMPLEX SUBUNIT DAM1"/>
    <property type="match status" value="1"/>
</dbReference>
<dbReference type="Pfam" id="PF08653">
    <property type="entry name" value="DASH_Dam1"/>
    <property type="match status" value="1"/>
</dbReference>
<evidence type="ECO:0000250" key="1">
    <source>
        <dbReference type="UniProtKB" id="P53267"/>
    </source>
</evidence>
<evidence type="ECO:0000250" key="2">
    <source>
        <dbReference type="UniProtKB" id="Q9HDZ6"/>
    </source>
</evidence>
<evidence type="ECO:0000256" key="3">
    <source>
        <dbReference type="SAM" id="MobiDB-lite"/>
    </source>
</evidence>
<evidence type="ECO:0000269" key="4">
    <source>
    </source>
</evidence>
<evidence type="ECO:0000303" key="5">
    <source>
    </source>
</evidence>
<evidence type="ECO:0000305" key="6"/>
<evidence type="ECO:0000312" key="7">
    <source>
        <dbReference type="EMBL" id="EGS22237.1"/>
    </source>
</evidence>
<evidence type="ECO:0000312" key="8">
    <source>
        <dbReference type="Proteomes" id="UP000008066"/>
    </source>
</evidence>
<evidence type="ECO:0007744" key="9">
    <source>
        <dbReference type="PDB" id="6CFZ"/>
    </source>
</evidence>
<gene>
    <name evidence="5" type="primary">DAM1</name>
    <name evidence="7" type="ORF">CTHT_0017540</name>
</gene>
<proteinExistence type="evidence at protein level"/>
<comment type="function">
    <text evidence="1">Component of the DASH complex that connects microtubules with kinetochores and couples microtubule depolymerisation to chromosome movement; it is involved in retrieving kinetochores to the spindle poles before their re-orientation on the spindle in early mitosis and allows microtubule depolymerization to pull chromosomes apart and resist detachment during anaphase. Kinetochores, consisting of a centromere-associated inner segment and a microtubule-contacting outer segment, play a crucial role in chromosome segregation by mediating the physical connection between centromeric DNA and microtubules. Kinetochores also serve as an input point for the spindle assembly checkpoint, which delays anaphase until all chromosomes have bioriented on the mitotic spindle.</text>
</comment>
<comment type="subunit">
    <text evidence="1 2 4">Component of the DASH complex consisting of ASK1, DAD1, DAD2, DAD3, DAD4, DAM1, DUO1, HSK3, SPC19 and SPC34, with a stoichiometry of one copy of each subunit per complex (PubMed:29724956). Multiple DASH complexes oligomerize to form a ring that encircles spindle microtubules and organizes the rod-like NDC80 complexes of the outer kinetochore (PubMed:29724956). DASH complex oligomerization strengthens microtubule attachments (By similarity). On cytoplasmic microtubules, DASH complexes appear to form patches instead of rings (By similarity).</text>
</comment>
<comment type="subcellular location">
    <subcellularLocation>
        <location evidence="1">Chromosome</location>
        <location evidence="1">Centromere</location>
        <location evidence="1">Kinetochore</location>
    </subcellularLocation>
    <subcellularLocation>
        <location evidence="1">Cytoplasm</location>
        <location evidence="1">Cytoskeleton</location>
        <location evidence="1">Spindle</location>
    </subcellularLocation>
    <subcellularLocation>
        <location evidence="1">Nucleus</location>
    </subcellularLocation>
</comment>
<comment type="similarity">
    <text evidence="6">Belongs to the DASH complex DAM1 family.</text>
</comment>
<feature type="chain" id="PRO_0000459462" description="DASH complex subunit DAM1">
    <location>
        <begin position="1"/>
        <end position="175"/>
    </location>
</feature>
<feature type="region of interest" description="Disordered" evidence="3">
    <location>
        <begin position="1"/>
        <end position="39"/>
    </location>
</feature>
<feature type="compositionally biased region" description="Low complexity" evidence="3">
    <location>
        <begin position="20"/>
        <end position="39"/>
    </location>
</feature>
<sequence length="175" mass="19604">MAPEDTNPQSSHRRTRSTSRSRPTTPLRPSSRSSFRSSARGSVYGDNAAFPLNAFEPAFAELADAVADLEANMMHFQLMHESLARFSESFASFLYGLNMNAFCVDFPEGPITESFKRMKLKEEEMQASSQIPSAWRGDPPISTPTAIYPRTDIRILIVKSGGYTWWKRRASWGSG</sequence>